<proteinExistence type="evidence at protein level"/>
<sequence>MSGAGVAAGTRPPSSPTPGSRRRRQRPSVGVQSLRPQSPQLRQSDPQKRNLDLEKSLQFLQQQHSEMLAKLHEEIEHLKRENKDLRYKLIMNQTSQKKDGPSGNHLSRASAPLGARWVCINGVWVEPGGPSPARLKEGSSRTHRPGGKHGRLAGGSADTVRSPADSLSTSSFQSVKSISNSGKARPQPGSFNKQDSKADVPQKADLEEEPLLHNSKLDKVPGVQGQARKEKAEASNAGAACMGNSQHQGRQMGAAAHPPMILPLPLRKPTTLRQCEVLIRELWNTNLLQTQELQHLKSLLEGSQRPQAVPEEASFPRDQEATHFPKVSTKSLSKKCLLLSPPVAERAILPALKQTPKNNFAERQKRLQAMQKRRLHRSVL</sequence>
<gene>
    <name type="primary">CCDC74B</name>
</gene>
<dbReference type="EMBL" id="AK057609">
    <property type="protein sequence ID" value="BAB71533.1"/>
    <property type="molecule type" value="mRNA"/>
</dbReference>
<dbReference type="EMBL" id="BC067771">
    <property type="protein sequence ID" value="AAH67771.1"/>
    <property type="molecule type" value="mRNA"/>
</dbReference>
<dbReference type="CCDS" id="CCDS2155.1">
    <molecule id="Q96LY2-1"/>
</dbReference>
<dbReference type="CCDS" id="CCDS58726.1">
    <molecule id="Q96LY2-2"/>
</dbReference>
<dbReference type="RefSeq" id="NP_001245236.1">
    <molecule id="Q96LY2-2"/>
    <property type="nucleotide sequence ID" value="NM_001258307.2"/>
</dbReference>
<dbReference type="RefSeq" id="NP_997193.1">
    <molecule id="Q96LY2-1"/>
    <property type="nucleotide sequence ID" value="NM_207310.4"/>
</dbReference>
<dbReference type="SMR" id="Q96LY2"/>
<dbReference type="BioGRID" id="124829">
    <property type="interactions" value="33"/>
</dbReference>
<dbReference type="FunCoup" id="Q96LY2">
    <property type="interactions" value="17"/>
</dbReference>
<dbReference type="IntAct" id="Q96LY2">
    <property type="interactions" value="35"/>
</dbReference>
<dbReference type="MINT" id="Q96LY2"/>
<dbReference type="STRING" id="9606.ENSP00000308873"/>
<dbReference type="GlyGen" id="Q96LY2">
    <property type="glycosylation" value="1 site"/>
</dbReference>
<dbReference type="iPTMnet" id="Q96LY2"/>
<dbReference type="PhosphoSitePlus" id="Q96LY2"/>
<dbReference type="BioMuta" id="CCDC74B"/>
<dbReference type="DMDM" id="74732259"/>
<dbReference type="jPOST" id="Q96LY2"/>
<dbReference type="MassIVE" id="Q96LY2"/>
<dbReference type="PaxDb" id="9606-ENSP00000308873"/>
<dbReference type="PeptideAtlas" id="Q96LY2"/>
<dbReference type="Antibodypedia" id="56078">
    <property type="antibodies" value="28 antibodies from 11 providers"/>
</dbReference>
<dbReference type="DNASU" id="91409"/>
<dbReference type="Ensembl" id="ENST00000310463.10">
    <molecule id="Q96LY2-1"/>
    <property type="protein sequence ID" value="ENSP00000308873.6"/>
    <property type="gene ID" value="ENSG00000152076.19"/>
</dbReference>
<dbReference type="Ensembl" id="ENST00000409943.8">
    <molecule id="Q96LY2-2"/>
    <property type="protein sequence ID" value="ENSP00000386294.3"/>
    <property type="gene ID" value="ENSG00000152076.19"/>
</dbReference>
<dbReference type="GeneID" id="91409"/>
<dbReference type="KEGG" id="hsa:91409"/>
<dbReference type="MANE-Select" id="ENST00000409943.8">
    <molecule id="Q96LY2-2"/>
    <property type="protein sequence ID" value="ENSP00000386294.3"/>
    <property type="RefSeq nucleotide sequence ID" value="NM_001258307.2"/>
    <property type="RefSeq protein sequence ID" value="NP_001245236.1"/>
</dbReference>
<dbReference type="UCSC" id="uc002tqm.3">
    <molecule id="Q96LY2-1"/>
    <property type="organism name" value="human"/>
</dbReference>
<dbReference type="AGR" id="HGNC:25267"/>
<dbReference type="CTD" id="91409"/>
<dbReference type="GeneCards" id="CCDC74B"/>
<dbReference type="HGNC" id="HGNC:25267">
    <property type="gene designation" value="CCDC74B"/>
</dbReference>
<dbReference type="HPA" id="ENSG00000152076">
    <property type="expression patterns" value="Tissue enhanced (testis)"/>
</dbReference>
<dbReference type="neXtProt" id="NX_Q96LY2"/>
<dbReference type="OpenTargets" id="ENSG00000152076"/>
<dbReference type="PharmGKB" id="PA143485426"/>
<dbReference type="VEuPathDB" id="HostDB:ENSG00000152076"/>
<dbReference type="eggNOG" id="ENOG502S5P9">
    <property type="taxonomic scope" value="Eukaryota"/>
</dbReference>
<dbReference type="GeneTree" id="ENSGT00390000007249"/>
<dbReference type="HOGENOM" id="CLU_844571_0_0_1"/>
<dbReference type="InParanoid" id="Q96LY2"/>
<dbReference type="OMA" id="HKNKRIP"/>
<dbReference type="OrthoDB" id="9534572at2759"/>
<dbReference type="PAN-GO" id="Q96LY2">
    <property type="GO annotations" value="0 GO annotations based on evolutionary models"/>
</dbReference>
<dbReference type="PhylomeDB" id="Q96LY2"/>
<dbReference type="TreeFam" id="TF329669"/>
<dbReference type="PathwayCommons" id="Q96LY2"/>
<dbReference type="SignaLink" id="Q96LY2"/>
<dbReference type="BioGRID-ORCS" id="91409">
    <property type="hits" value="33 hits in 1074 CRISPR screens"/>
</dbReference>
<dbReference type="ChiTaRS" id="CCDC74B">
    <property type="organism name" value="human"/>
</dbReference>
<dbReference type="GenomeRNAi" id="91409"/>
<dbReference type="Pharos" id="Q96LY2">
    <property type="development level" value="Tdark"/>
</dbReference>
<dbReference type="PRO" id="PR:Q96LY2"/>
<dbReference type="Proteomes" id="UP000005640">
    <property type="component" value="Chromosome 2"/>
</dbReference>
<dbReference type="RNAct" id="Q96LY2">
    <property type="molecule type" value="protein"/>
</dbReference>
<dbReference type="Bgee" id="ENSG00000152076">
    <property type="expression patterns" value="Expressed in right uterine tube and 98 other cell types or tissues"/>
</dbReference>
<dbReference type="ExpressionAtlas" id="Q96LY2">
    <property type="expression patterns" value="baseline and differential"/>
</dbReference>
<dbReference type="InterPro" id="IPR029422">
    <property type="entry name" value="CCDC74_C"/>
</dbReference>
<dbReference type="InterPro" id="IPR040370">
    <property type="entry name" value="CCDC74A/CCDC74B/CCDC92"/>
</dbReference>
<dbReference type="InterPro" id="IPR039496">
    <property type="entry name" value="CCDC92/74_N"/>
</dbReference>
<dbReference type="PANTHER" id="PTHR14882">
    <property type="entry name" value="COILED-COIL DOMAIN-CONTAINING 74A"/>
    <property type="match status" value="1"/>
</dbReference>
<dbReference type="PANTHER" id="PTHR14882:SF7">
    <property type="entry name" value="COILED-COIL DOMAIN-CONTAINING PROTEIN 74A-RELATED"/>
    <property type="match status" value="1"/>
</dbReference>
<dbReference type="Pfam" id="PF14917">
    <property type="entry name" value="CCDC74_C"/>
    <property type="match status" value="1"/>
</dbReference>
<dbReference type="Pfam" id="PF14916">
    <property type="entry name" value="CCDC92"/>
    <property type="match status" value="1"/>
</dbReference>
<accession>Q96LY2</accession>
<accession>Q6NW18</accession>
<name>CC74B_HUMAN</name>
<reference key="1">
    <citation type="journal article" date="2004" name="Nat. Genet.">
        <title>Complete sequencing and characterization of 21,243 full-length human cDNAs.</title>
        <authorList>
            <person name="Ota T."/>
            <person name="Suzuki Y."/>
            <person name="Nishikawa T."/>
            <person name="Otsuki T."/>
            <person name="Sugiyama T."/>
            <person name="Irie R."/>
            <person name="Wakamatsu A."/>
            <person name="Hayashi K."/>
            <person name="Sato H."/>
            <person name="Nagai K."/>
            <person name="Kimura K."/>
            <person name="Makita H."/>
            <person name="Sekine M."/>
            <person name="Obayashi M."/>
            <person name="Nishi T."/>
            <person name="Shibahara T."/>
            <person name="Tanaka T."/>
            <person name="Ishii S."/>
            <person name="Yamamoto J."/>
            <person name="Saito K."/>
            <person name="Kawai Y."/>
            <person name="Isono Y."/>
            <person name="Nakamura Y."/>
            <person name="Nagahari K."/>
            <person name="Murakami K."/>
            <person name="Yasuda T."/>
            <person name="Iwayanagi T."/>
            <person name="Wagatsuma M."/>
            <person name="Shiratori A."/>
            <person name="Sudo H."/>
            <person name="Hosoiri T."/>
            <person name="Kaku Y."/>
            <person name="Kodaira H."/>
            <person name="Kondo H."/>
            <person name="Sugawara M."/>
            <person name="Takahashi M."/>
            <person name="Kanda K."/>
            <person name="Yokoi T."/>
            <person name="Furuya T."/>
            <person name="Kikkawa E."/>
            <person name="Omura Y."/>
            <person name="Abe K."/>
            <person name="Kamihara K."/>
            <person name="Katsuta N."/>
            <person name="Sato K."/>
            <person name="Tanikawa M."/>
            <person name="Yamazaki M."/>
            <person name="Ninomiya K."/>
            <person name="Ishibashi T."/>
            <person name="Yamashita H."/>
            <person name="Murakawa K."/>
            <person name="Fujimori K."/>
            <person name="Tanai H."/>
            <person name="Kimata M."/>
            <person name="Watanabe M."/>
            <person name="Hiraoka S."/>
            <person name="Chiba Y."/>
            <person name="Ishida S."/>
            <person name="Ono Y."/>
            <person name="Takiguchi S."/>
            <person name="Watanabe S."/>
            <person name="Yosida M."/>
            <person name="Hotuta T."/>
            <person name="Kusano J."/>
            <person name="Kanehori K."/>
            <person name="Takahashi-Fujii A."/>
            <person name="Hara H."/>
            <person name="Tanase T.-O."/>
            <person name="Nomura Y."/>
            <person name="Togiya S."/>
            <person name="Komai F."/>
            <person name="Hara R."/>
            <person name="Takeuchi K."/>
            <person name="Arita M."/>
            <person name="Imose N."/>
            <person name="Musashino K."/>
            <person name="Yuuki H."/>
            <person name="Oshima A."/>
            <person name="Sasaki N."/>
            <person name="Aotsuka S."/>
            <person name="Yoshikawa Y."/>
            <person name="Matsunawa H."/>
            <person name="Ichihara T."/>
            <person name="Shiohata N."/>
            <person name="Sano S."/>
            <person name="Moriya S."/>
            <person name="Momiyama H."/>
            <person name="Satoh N."/>
            <person name="Takami S."/>
            <person name="Terashima Y."/>
            <person name="Suzuki O."/>
            <person name="Nakagawa S."/>
            <person name="Senoh A."/>
            <person name="Mizoguchi H."/>
            <person name="Goto Y."/>
            <person name="Shimizu F."/>
            <person name="Wakebe H."/>
            <person name="Hishigaki H."/>
            <person name="Watanabe T."/>
            <person name="Sugiyama A."/>
            <person name="Takemoto M."/>
            <person name="Kawakami B."/>
            <person name="Yamazaki M."/>
            <person name="Watanabe K."/>
            <person name="Kumagai A."/>
            <person name="Itakura S."/>
            <person name="Fukuzumi Y."/>
            <person name="Fujimori Y."/>
            <person name="Komiyama M."/>
            <person name="Tashiro H."/>
            <person name="Tanigami A."/>
            <person name="Fujiwara T."/>
            <person name="Ono T."/>
            <person name="Yamada K."/>
            <person name="Fujii Y."/>
            <person name="Ozaki K."/>
            <person name="Hirao M."/>
            <person name="Ohmori Y."/>
            <person name="Kawabata A."/>
            <person name="Hikiji T."/>
            <person name="Kobatake N."/>
            <person name="Inagaki H."/>
            <person name="Ikema Y."/>
            <person name="Okamoto S."/>
            <person name="Okitani R."/>
            <person name="Kawakami T."/>
            <person name="Noguchi S."/>
            <person name="Itoh T."/>
            <person name="Shigeta K."/>
            <person name="Senba T."/>
            <person name="Matsumura K."/>
            <person name="Nakajima Y."/>
            <person name="Mizuno T."/>
            <person name="Morinaga M."/>
            <person name="Sasaki M."/>
            <person name="Togashi T."/>
            <person name="Oyama M."/>
            <person name="Hata H."/>
            <person name="Watanabe M."/>
            <person name="Komatsu T."/>
            <person name="Mizushima-Sugano J."/>
            <person name="Satoh T."/>
            <person name="Shirai Y."/>
            <person name="Takahashi Y."/>
            <person name="Nakagawa K."/>
            <person name="Okumura K."/>
            <person name="Nagase T."/>
            <person name="Nomura N."/>
            <person name="Kikuchi H."/>
            <person name="Masuho Y."/>
            <person name="Yamashita R."/>
            <person name="Nakai K."/>
            <person name="Yada T."/>
            <person name="Nakamura Y."/>
            <person name="Ohara O."/>
            <person name="Isogai T."/>
            <person name="Sugano S."/>
        </authorList>
    </citation>
    <scope>NUCLEOTIDE SEQUENCE [LARGE SCALE MRNA] (ISOFORM 1)</scope>
    <source>
        <tissue>Trachea</tissue>
    </source>
</reference>
<reference key="2">
    <citation type="journal article" date="2004" name="Genome Res.">
        <title>The status, quality, and expansion of the NIH full-length cDNA project: the Mammalian Gene Collection (MGC).</title>
        <authorList>
            <consortium name="The MGC Project Team"/>
        </authorList>
    </citation>
    <scope>NUCLEOTIDE SEQUENCE [LARGE SCALE MRNA] (ISOFORM 2)</scope>
    <source>
        <tissue>Testis</tissue>
    </source>
</reference>
<organism>
    <name type="scientific">Homo sapiens</name>
    <name type="common">Human</name>
    <dbReference type="NCBI Taxonomy" id="9606"/>
    <lineage>
        <taxon>Eukaryota</taxon>
        <taxon>Metazoa</taxon>
        <taxon>Chordata</taxon>
        <taxon>Craniata</taxon>
        <taxon>Vertebrata</taxon>
        <taxon>Euteleostomi</taxon>
        <taxon>Mammalia</taxon>
        <taxon>Eutheria</taxon>
        <taxon>Euarchontoglires</taxon>
        <taxon>Primates</taxon>
        <taxon>Haplorrhini</taxon>
        <taxon>Catarrhini</taxon>
        <taxon>Hominidae</taxon>
        <taxon>Homo</taxon>
    </lineage>
</organism>
<feature type="chain" id="PRO_0000274375" description="Coiled-coil domain-containing protein 74B">
    <location>
        <begin position="1"/>
        <end position="380"/>
    </location>
</feature>
<feature type="region of interest" description="Disordered" evidence="2">
    <location>
        <begin position="1"/>
        <end position="51"/>
    </location>
</feature>
<feature type="region of interest" description="Disordered" evidence="2">
    <location>
        <begin position="89"/>
        <end position="108"/>
    </location>
</feature>
<feature type="region of interest" description="Disordered" evidence="2">
    <location>
        <begin position="128"/>
        <end position="202"/>
    </location>
</feature>
<feature type="coiled-coil region" evidence="1">
    <location>
        <begin position="47"/>
        <end position="93"/>
    </location>
</feature>
<feature type="compositionally biased region" description="Polar residues" evidence="2">
    <location>
        <begin position="34"/>
        <end position="44"/>
    </location>
</feature>
<feature type="compositionally biased region" description="Basic residues" evidence="2">
    <location>
        <begin position="141"/>
        <end position="151"/>
    </location>
</feature>
<feature type="compositionally biased region" description="Polar residues" evidence="2">
    <location>
        <begin position="165"/>
        <end position="182"/>
    </location>
</feature>
<feature type="splice variant" id="VSP_022730" description="In isoform 2." evidence="3">
    <location>
        <begin position="100"/>
        <end position="165"/>
    </location>
</feature>
<feature type="sequence variant" id="VAR_030269" description="In dbSNP:rs184349150.">
    <original>T</original>
    <variation>M</variation>
    <location>
        <position position="169"/>
    </location>
</feature>
<feature type="sequence variant" id="VAR_030270" description="In dbSNP:rs3177472.">
    <original>R</original>
    <variation>H</variation>
    <location>
        <position position="346"/>
    </location>
</feature>
<comment type="interaction">
    <interactant intactId="EBI-17967022">
        <id>Q96LY2-2</id>
    </interactant>
    <interactant intactId="EBI-11096309">
        <id>Q9NYB9-2</id>
        <label>ABI2</label>
    </interactant>
    <organismsDiffer>false</organismsDiffer>
    <experiments>3</experiments>
</comment>
<comment type="interaction">
    <interactant intactId="EBI-17967022">
        <id>Q96LY2-2</id>
    </interactant>
    <interactant intactId="EBI-11524452">
        <id>Q8N9N5-2</id>
        <label>BANP</label>
    </interactant>
    <organismsDiffer>false</organismsDiffer>
    <experiments>3</experiments>
</comment>
<comment type="interaction">
    <interactant intactId="EBI-17967022">
        <id>Q96LY2-2</id>
    </interactant>
    <interactant intactId="EBI-9675710">
        <id>Q5T8I9</id>
        <label>HENMT1</label>
    </interactant>
    <organismsDiffer>false</organismsDiffer>
    <experiments>3</experiments>
</comment>
<comment type="interaction">
    <interactant intactId="EBI-17967022">
        <id>Q96LY2-2</id>
    </interactant>
    <interactant intactId="EBI-11742507">
        <id>Q8TAP4-4</id>
        <label>LMO3</label>
    </interactant>
    <organismsDiffer>false</organismsDiffer>
    <experiments>3</experiments>
</comment>
<comment type="interaction">
    <interactant intactId="EBI-17967022">
        <id>Q96LY2-2</id>
    </interactant>
    <interactant intactId="EBI-744248">
        <id>P40692</id>
        <label>MLH1</label>
    </interactant>
    <organismsDiffer>false</organismsDiffer>
    <experiments>3</experiments>
</comment>
<comment type="interaction">
    <interactant intactId="EBI-17967022">
        <id>Q96LY2-2</id>
    </interactant>
    <interactant intactId="EBI-1383528">
        <id>P17252</id>
        <label>PRKCA</label>
    </interactant>
    <organismsDiffer>false</organismsDiffer>
    <experiments>3</experiments>
</comment>
<comment type="interaction">
    <interactant intactId="EBI-17967022">
        <id>Q96LY2-2</id>
    </interactant>
    <interactant intactId="EBI-748391">
        <id>Q9BWG6</id>
        <label>SCNM1</label>
    </interactant>
    <organismsDiffer>false</organismsDiffer>
    <experiments>3</experiments>
</comment>
<comment type="interaction">
    <interactant intactId="EBI-17967022">
        <id>Q96LY2-2</id>
    </interactant>
    <interactant intactId="EBI-9090795">
        <id>Q15047-2</id>
        <label>SETDB1</label>
    </interactant>
    <organismsDiffer>false</organismsDiffer>
    <experiments>3</experiments>
</comment>
<comment type="interaction">
    <interactant intactId="EBI-17967022">
        <id>Q96LY2-2</id>
    </interactant>
    <interactant intactId="EBI-1380492">
        <id>Q8TF42</id>
        <label>UBASH3B</label>
    </interactant>
    <organismsDiffer>false</organismsDiffer>
    <experiments>3</experiments>
</comment>
<comment type="interaction">
    <interactant intactId="EBI-17967022">
        <id>Q96LY2-2</id>
    </interactant>
    <interactant intactId="EBI-359832">
        <id>P61981</id>
        <label>YWHAG</label>
    </interactant>
    <organismsDiffer>false</organismsDiffer>
    <experiments>3</experiments>
</comment>
<comment type="alternative products">
    <event type="alternative splicing"/>
    <isoform>
        <id>Q96LY2-1</id>
        <name>1</name>
        <sequence type="displayed"/>
    </isoform>
    <isoform>
        <id>Q96LY2-2</id>
        <name>2</name>
        <sequence type="described" ref="VSP_022730"/>
    </isoform>
</comment>
<keyword id="KW-0025">Alternative splicing</keyword>
<keyword id="KW-0175">Coiled coil</keyword>
<keyword id="KW-1267">Proteomics identification</keyword>
<keyword id="KW-1185">Reference proteome</keyword>
<evidence type="ECO:0000255" key="1"/>
<evidence type="ECO:0000256" key="2">
    <source>
        <dbReference type="SAM" id="MobiDB-lite"/>
    </source>
</evidence>
<evidence type="ECO:0000303" key="3">
    <source>
    </source>
</evidence>
<protein>
    <recommendedName>
        <fullName>Coiled-coil domain-containing protein 74B</fullName>
    </recommendedName>
</protein>